<feature type="chain" id="PRO_0000131188" description="Large ribosomal subunit protein eL19">
    <location>
        <begin position="1"/>
        <end position="149"/>
    </location>
</feature>
<feature type="region of interest" description="Disordered" evidence="2">
    <location>
        <begin position="45"/>
        <end position="94"/>
    </location>
</feature>
<feature type="compositionally biased region" description="Basic and acidic residues" evidence="2">
    <location>
        <begin position="62"/>
        <end position="73"/>
    </location>
</feature>
<feature type="compositionally biased region" description="Basic residues" evidence="2">
    <location>
        <begin position="74"/>
        <end position="85"/>
    </location>
</feature>
<dbReference type="EMBL" id="AE004437">
    <property type="protein sequence ID" value="AAG19954.1"/>
    <property type="molecule type" value="Genomic_DNA"/>
</dbReference>
<dbReference type="PIR" id="F84323">
    <property type="entry name" value="F84323"/>
</dbReference>
<dbReference type="RefSeq" id="WP_010903252.1">
    <property type="nucleotide sequence ID" value="NC_002607.1"/>
</dbReference>
<dbReference type="SMR" id="Q9HPB6"/>
<dbReference type="FunCoup" id="Q9HPB6">
    <property type="interactions" value="149"/>
</dbReference>
<dbReference type="STRING" id="64091.VNG_1713G"/>
<dbReference type="PaxDb" id="64091-VNG_1713G"/>
<dbReference type="KEGG" id="hal:VNG_1713G"/>
<dbReference type="PATRIC" id="fig|64091.14.peg.1306"/>
<dbReference type="HOGENOM" id="CLU_083919_1_1_2"/>
<dbReference type="InParanoid" id="Q9HPB6"/>
<dbReference type="OrthoDB" id="11624at2157"/>
<dbReference type="PhylomeDB" id="Q9HPB6"/>
<dbReference type="Proteomes" id="UP000000554">
    <property type="component" value="Chromosome"/>
</dbReference>
<dbReference type="GO" id="GO:0022625">
    <property type="term" value="C:cytosolic large ribosomal subunit"/>
    <property type="evidence" value="ECO:0000318"/>
    <property type="project" value="GO_Central"/>
</dbReference>
<dbReference type="GO" id="GO:0070180">
    <property type="term" value="F:large ribosomal subunit rRNA binding"/>
    <property type="evidence" value="ECO:0007669"/>
    <property type="project" value="UniProtKB-UniRule"/>
</dbReference>
<dbReference type="GO" id="GO:0003723">
    <property type="term" value="F:RNA binding"/>
    <property type="evidence" value="ECO:0000318"/>
    <property type="project" value="GO_Central"/>
</dbReference>
<dbReference type="GO" id="GO:0003735">
    <property type="term" value="F:structural constituent of ribosome"/>
    <property type="evidence" value="ECO:0000318"/>
    <property type="project" value="GO_Central"/>
</dbReference>
<dbReference type="GO" id="GO:0006412">
    <property type="term" value="P:translation"/>
    <property type="evidence" value="ECO:0007669"/>
    <property type="project" value="UniProtKB-UniRule"/>
</dbReference>
<dbReference type="CDD" id="cd01418">
    <property type="entry name" value="Ribosomal_L19e_A"/>
    <property type="match status" value="1"/>
</dbReference>
<dbReference type="FunFam" id="1.10.1650.10:FF:000001">
    <property type="entry name" value="Ribosomal protein L19"/>
    <property type="match status" value="1"/>
</dbReference>
<dbReference type="Gene3D" id="1.10.1200.60">
    <property type="match status" value="1"/>
</dbReference>
<dbReference type="Gene3D" id="1.10.1650.10">
    <property type="match status" value="1"/>
</dbReference>
<dbReference type="Gene3D" id="1.20.5.560">
    <property type="entry name" value="Single Heli x bin"/>
    <property type="match status" value="1"/>
</dbReference>
<dbReference type="HAMAP" id="MF_01475">
    <property type="entry name" value="Ribosomal_eL19"/>
    <property type="match status" value="1"/>
</dbReference>
<dbReference type="InterPro" id="IPR035970">
    <property type="entry name" value="60S_ribosomal_eL19_sf"/>
</dbReference>
<dbReference type="InterPro" id="IPR039547">
    <property type="entry name" value="Ribosomal_eL19"/>
</dbReference>
<dbReference type="InterPro" id="IPR033936">
    <property type="entry name" value="Ribosomal_eL19_arc"/>
</dbReference>
<dbReference type="InterPro" id="IPR023638">
    <property type="entry name" value="Ribosomal_eL19_CS"/>
</dbReference>
<dbReference type="InterPro" id="IPR000196">
    <property type="entry name" value="Ribosomal_eL19_dom"/>
</dbReference>
<dbReference type="InterPro" id="IPR015972">
    <property type="entry name" value="Ribosomal_eL19_dom1"/>
</dbReference>
<dbReference type="InterPro" id="IPR015973">
    <property type="entry name" value="Ribosomal_eL19_dom2"/>
</dbReference>
<dbReference type="InterPro" id="IPR015974">
    <property type="entry name" value="Ribosomal_eL19_dom3"/>
</dbReference>
<dbReference type="NCBIfam" id="NF006343">
    <property type="entry name" value="PRK08570.1"/>
    <property type="match status" value="1"/>
</dbReference>
<dbReference type="PANTHER" id="PTHR10722">
    <property type="entry name" value="60S RIBOSOMAL PROTEIN L19"/>
    <property type="match status" value="1"/>
</dbReference>
<dbReference type="Pfam" id="PF01280">
    <property type="entry name" value="Ribosomal_L19e"/>
    <property type="match status" value="1"/>
</dbReference>
<dbReference type="Pfam" id="PF25476">
    <property type="entry name" value="Ribosomal_L19e_C"/>
    <property type="match status" value="1"/>
</dbReference>
<dbReference type="SMART" id="SM01416">
    <property type="entry name" value="Ribosomal_L19e"/>
    <property type="match status" value="1"/>
</dbReference>
<dbReference type="SUPFAM" id="SSF48140">
    <property type="entry name" value="Ribosomal protein L19 (L19e)"/>
    <property type="match status" value="1"/>
</dbReference>
<dbReference type="PROSITE" id="PS00526">
    <property type="entry name" value="RIBOSOMAL_L19E"/>
    <property type="match status" value="1"/>
</dbReference>
<accession>Q9HPB6</accession>
<evidence type="ECO:0000255" key="1">
    <source>
        <dbReference type="HAMAP-Rule" id="MF_01475"/>
    </source>
</evidence>
<evidence type="ECO:0000256" key="2">
    <source>
        <dbReference type="SAM" id="MobiDB-lite"/>
    </source>
</evidence>
<evidence type="ECO:0000305" key="3"/>
<protein>
    <recommendedName>
        <fullName evidence="1">Large ribosomal subunit protein eL19</fullName>
    </recommendedName>
    <alternativeName>
        <fullName evidence="3">50S ribosomal protein L19e</fullName>
    </alternativeName>
</protein>
<comment type="function">
    <text evidence="1">Binds to the 23S rRNA.</text>
</comment>
<comment type="subunit">
    <text evidence="1">Part of the 50S ribosomal subunit.</text>
</comment>
<comment type="similarity">
    <text evidence="1">Belongs to the eukaryotic ribosomal protein eL19 family.</text>
</comment>
<sequence length="149" mass="16730">MSDLSAQKRLAADVLDVGENRVWFDPDAQSEIADAITREDIRELVADGTIDAEDTQGNSRGRARERDAKESYGHKKGAGSRKGKAGARQNEKREYVAGIRAQRQQLRELRDDGTLSPAQYREMYNMANGGEFDSVRRLTNYVEENYGDS</sequence>
<keyword id="KW-1185">Reference proteome</keyword>
<keyword id="KW-0687">Ribonucleoprotein</keyword>
<keyword id="KW-0689">Ribosomal protein</keyword>
<keyword id="KW-0694">RNA-binding</keyword>
<keyword id="KW-0699">rRNA-binding</keyword>
<proteinExistence type="inferred from homology"/>
<reference key="1">
    <citation type="journal article" date="2000" name="Proc. Natl. Acad. Sci. U.S.A.">
        <title>Genome sequence of Halobacterium species NRC-1.</title>
        <authorList>
            <person name="Ng W.V."/>
            <person name="Kennedy S.P."/>
            <person name="Mahairas G.G."/>
            <person name="Berquist B."/>
            <person name="Pan M."/>
            <person name="Shukla H.D."/>
            <person name="Lasky S.R."/>
            <person name="Baliga N.S."/>
            <person name="Thorsson V."/>
            <person name="Sbrogna J."/>
            <person name="Swartzell S."/>
            <person name="Weir D."/>
            <person name="Hall J."/>
            <person name="Dahl T.A."/>
            <person name="Welti R."/>
            <person name="Goo Y.A."/>
            <person name="Leithauser B."/>
            <person name="Keller K."/>
            <person name="Cruz R."/>
            <person name="Danson M.J."/>
            <person name="Hough D.W."/>
            <person name="Maddocks D.G."/>
            <person name="Jablonski P.E."/>
            <person name="Krebs M.P."/>
            <person name="Angevine C.M."/>
            <person name="Dale H."/>
            <person name="Isenbarger T.A."/>
            <person name="Peck R.F."/>
            <person name="Pohlschroder M."/>
            <person name="Spudich J.L."/>
            <person name="Jung K.-H."/>
            <person name="Alam M."/>
            <person name="Freitas T."/>
            <person name="Hou S."/>
            <person name="Daniels C.J."/>
            <person name="Dennis P.P."/>
            <person name="Omer A.D."/>
            <person name="Ebhardt H."/>
            <person name="Lowe T.M."/>
            <person name="Liang P."/>
            <person name="Riley M."/>
            <person name="Hood L."/>
            <person name="DasSarma S."/>
        </authorList>
    </citation>
    <scope>NUCLEOTIDE SEQUENCE [LARGE SCALE GENOMIC DNA]</scope>
    <source>
        <strain>ATCC 700922 / JCM 11081 / NRC-1</strain>
    </source>
</reference>
<name>RL19E_HALSA</name>
<gene>
    <name evidence="1" type="primary">rpl19e</name>
    <name type="ordered locus">VNG_1713G</name>
</gene>
<organism>
    <name type="scientific">Halobacterium salinarum (strain ATCC 700922 / JCM 11081 / NRC-1)</name>
    <name type="common">Halobacterium halobium</name>
    <dbReference type="NCBI Taxonomy" id="64091"/>
    <lineage>
        <taxon>Archaea</taxon>
        <taxon>Methanobacteriati</taxon>
        <taxon>Methanobacteriota</taxon>
        <taxon>Stenosarchaea group</taxon>
        <taxon>Halobacteria</taxon>
        <taxon>Halobacteriales</taxon>
        <taxon>Halobacteriaceae</taxon>
        <taxon>Halobacterium</taxon>
        <taxon>Halobacterium salinarum NRC-34001</taxon>
    </lineage>
</organism>